<sequence>MSEDMEVTNWGYTHISVKEFCYVWTIRNFSPCIDGIRRTITSPVFSLEANDEVTWCLIAHPNGVDEVSECYMSVFLELLSCRKSPVWAKYEFWITTSQGEKYQCMKSFNVHSFQKNQYRGFKKFILGDFLISHPRRFLPENKLTLCCKVSIVGSVFGMPGQNITPAIKDPRHLLTDDLGELWENSLFTDCCLLVAGHEFRAHKAILAARSPVFRAMFEHEMEERLGNPTEIHDLDPKVFKEMMGFIYTGKAPHLQSHSMATDVLTAADKYGLEGLKVLCEDALCRNLSVENAAQTLILADLHKREQLKTQALYFIALHASVVSETSEWKSMMETHPHLVG</sequence>
<organism>
    <name type="scientific">Mus musculus</name>
    <name type="common">Mouse</name>
    <dbReference type="NCBI Taxonomy" id="10090"/>
    <lineage>
        <taxon>Eukaryota</taxon>
        <taxon>Metazoa</taxon>
        <taxon>Chordata</taxon>
        <taxon>Craniata</taxon>
        <taxon>Vertebrata</taxon>
        <taxon>Euteleostomi</taxon>
        <taxon>Mammalia</taxon>
        <taxon>Eutheria</taxon>
        <taxon>Euarchontoglires</taxon>
        <taxon>Glires</taxon>
        <taxon>Rodentia</taxon>
        <taxon>Myomorpha</taxon>
        <taxon>Muroidea</taxon>
        <taxon>Muridae</taxon>
        <taxon>Murinae</taxon>
        <taxon>Mus</taxon>
        <taxon>Mus</taxon>
    </lineage>
</organism>
<keyword id="KW-1185">Reference proteome</keyword>
<gene>
    <name evidence="5" type="primary">Tdpoz5</name>
</gene>
<reference evidence="4 5" key="1">
    <citation type="journal article" date="2004" name="Gene">
        <title>TDPOZ, a family of bipartite animal and plant proteins that contain the TRAF (TD) and POZ/BTB domains.</title>
        <authorList>
            <person name="Huang C.-J."/>
            <person name="Chen C.-Y."/>
            <person name="Chen H.-H."/>
            <person name="Tsai S.-F."/>
            <person name="Choo K.-B."/>
        </authorList>
    </citation>
    <scope>NUCLEOTIDE SEQUENCE [GENOMIC DNA]</scope>
    <scope>DEVELOPMENTAL STAGE</scope>
    <source>
        <strain evidence="5">129/Sv</strain>
    </source>
</reference>
<name>TDPZ5_MOUSE</name>
<proteinExistence type="evidence at transcript level"/>
<comment type="developmental stage">
    <text evidence="3">Strongly expressed in 2-cell embryos with weak expression detected in other embryonic stages. Also weakly expressed in adult testis.</text>
</comment>
<comment type="similarity">
    <text evidence="4">Belongs to the Tdpoz family.</text>
</comment>
<evidence type="ECO:0000255" key="1">
    <source>
        <dbReference type="PROSITE-ProRule" id="PRU00037"/>
    </source>
</evidence>
<evidence type="ECO:0000255" key="2">
    <source>
        <dbReference type="PROSITE-ProRule" id="PRU00129"/>
    </source>
</evidence>
<evidence type="ECO:0000269" key="3">
    <source>
    </source>
</evidence>
<evidence type="ECO:0000305" key="4"/>
<evidence type="ECO:0000312" key="5">
    <source>
        <dbReference type="EMBL" id="AAO20103.1"/>
    </source>
</evidence>
<dbReference type="EMBL" id="AY159315">
    <property type="protein sequence ID" value="AAO20103.1"/>
    <property type="molecule type" value="Genomic_DNA"/>
</dbReference>
<dbReference type="CCDS" id="CCDS17588.1"/>
<dbReference type="SMR" id="Q6YCH1"/>
<dbReference type="FunCoup" id="Q6YCH1">
    <property type="interactions" value="82"/>
</dbReference>
<dbReference type="STRING" id="10090.ENSMUSP00000089284"/>
<dbReference type="PaxDb" id="10090-ENSMUSP00000089284"/>
<dbReference type="AGR" id="MGI:3027905"/>
<dbReference type="MGI" id="MGI:3027905">
    <property type="gene designation" value="Tdpoz5"/>
</dbReference>
<dbReference type="eggNOG" id="KOG1987">
    <property type="taxonomic scope" value="Eukaryota"/>
</dbReference>
<dbReference type="InParanoid" id="Q6YCH1"/>
<dbReference type="PhylomeDB" id="Q6YCH1"/>
<dbReference type="ChiTaRS" id="Tdpoz5">
    <property type="organism name" value="mouse"/>
</dbReference>
<dbReference type="PRO" id="PR:Q6YCH1"/>
<dbReference type="Proteomes" id="UP000000589">
    <property type="component" value="Unplaced"/>
</dbReference>
<dbReference type="RNAct" id="Q6YCH1">
    <property type="molecule type" value="protein"/>
</dbReference>
<dbReference type="GO" id="GO:0030163">
    <property type="term" value="P:protein catabolic process"/>
    <property type="evidence" value="ECO:0007669"/>
    <property type="project" value="UniProtKB-ARBA"/>
</dbReference>
<dbReference type="CDD" id="cd18344">
    <property type="entry name" value="BTB_POZ_TDPOZ"/>
    <property type="match status" value="1"/>
</dbReference>
<dbReference type="FunFam" id="3.30.710.10:FF:000147">
    <property type="entry name" value="Predicted gene 4858"/>
    <property type="match status" value="1"/>
</dbReference>
<dbReference type="FunFam" id="2.60.210.10:FF:000003">
    <property type="entry name" value="Speckle-type POZ protein-like a"/>
    <property type="match status" value="1"/>
</dbReference>
<dbReference type="Gene3D" id="6.10.250.3030">
    <property type="match status" value="1"/>
</dbReference>
<dbReference type="Gene3D" id="6.20.250.50">
    <property type="match status" value="1"/>
</dbReference>
<dbReference type="Gene3D" id="2.60.210.10">
    <property type="entry name" value="Apoptosis, Tumor Necrosis Factor Receptor Associated Protein 2, Chain A"/>
    <property type="match status" value="1"/>
</dbReference>
<dbReference type="Gene3D" id="3.30.710.10">
    <property type="entry name" value="Potassium Channel Kv1.1, Chain A"/>
    <property type="match status" value="1"/>
</dbReference>
<dbReference type="InterPro" id="IPR000210">
    <property type="entry name" value="BTB/POZ_dom"/>
</dbReference>
<dbReference type="InterPro" id="IPR002083">
    <property type="entry name" value="MATH/TRAF_dom"/>
</dbReference>
<dbReference type="InterPro" id="IPR011333">
    <property type="entry name" value="SKP1/BTB/POZ_sf"/>
</dbReference>
<dbReference type="InterPro" id="IPR008974">
    <property type="entry name" value="TRAF-like"/>
</dbReference>
<dbReference type="PANTHER" id="PTHR24413">
    <property type="entry name" value="SPECKLE-TYPE POZ PROTEIN"/>
    <property type="match status" value="1"/>
</dbReference>
<dbReference type="Pfam" id="PF00651">
    <property type="entry name" value="BTB"/>
    <property type="match status" value="1"/>
</dbReference>
<dbReference type="Pfam" id="PF22486">
    <property type="entry name" value="MATH_2"/>
    <property type="match status" value="1"/>
</dbReference>
<dbReference type="SMART" id="SM00225">
    <property type="entry name" value="BTB"/>
    <property type="match status" value="1"/>
</dbReference>
<dbReference type="SUPFAM" id="SSF54695">
    <property type="entry name" value="POZ domain"/>
    <property type="match status" value="1"/>
</dbReference>
<dbReference type="SUPFAM" id="SSF49599">
    <property type="entry name" value="TRAF domain-like"/>
    <property type="match status" value="1"/>
</dbReference>
<dbReference type="PROSITE" id="PS50097">
    <property type="entry name" value="BTB"/>
    <property type="match status" value="1"/>
</dbReference>
<dbReference type="PROSITE" id="PS50144">
    <property type="entry name" value="MATH"/>
    <property type="match status" value="1"/>
</dbReference>
<protein>
    <recommendedName>
        <fullName>TD and POZ domain-containing protein 5</fullName>
    </recommendedName>
</protein>
<feature type="chain" id="PRO_0000191627" description="TD and POZ domain-containing protein 5">
    <location>
        <begin position="1"/>
        <end position="340"/>
    </location>
</feature>
<feature type="domain" description="MATH" evidence="2">
    <location>
        <begin position="19"/>
        <end position="149"/>
    </location>
</feature>
<feature type="domain" description="BTB" evidence="1">
    <location>
        <begin position="188"/>
        <end position="255"/>
    </location>
</feature>
<accession>Q6YCH1</accession>